<keyword id="KW-0997">Cell inner membrane</keyword>
<keyword id="KW-1003">Cell membrane</keyword>
<keyword id="KW-0472">Membrane</keyword>
<keyword id="KW-0808">Transferase</keyword>
<keyword id="KW-0812">Transmembrane</keyword>
<keyword id="KW-1133">Transmembrane helix</keyword>
<evidence type="ECO:0000255" key="1">
    <source>
        <dbReference type="HAMAP-Rule" id="MF_01147"/>
    </source>
</evidence>
<dbReference type="EC" id="2.5.1.145" evidence="1"/>
<dbReference type="EMBL" id="CP000030">
    <property type="protein sequence ID" value="AAV87046.1"/>
    <property type="molecule type" value="Genomic_DNA"/>
</dbReference>
<dbReference type="SMR" id="Q5P9I4"/>
<dbReference type="KEGG" id="ama:AM1231"/>
<dbReference type="HOGENOM" id="CLU_013386_1_0_5"/>
<dbReference type="UniPathway" id="UPA00664"/>
<dbReference type="GO" id="GO:0005886">
    <property type="term" value="C:plasma membrane"/>
    <property type="evidence" value="ECO:0007669"/>
    <property type="project" value="UniProtKB-SubCell"/>
</dbReference>
<dbReference type="GO" id="GO:0008961">
    <property type="term" value="F:phosphatidylglycerol-prolipoprotein diacylglyceryl transferase activity"/>
    <property type="evidence" value="ECO:0007669"/>
    <property type="project" value="UniProtKB-UniRule"/>
</dbReference>
<dbReference type="GO" id="GO:0042158">
    <property type="term" value="P:lipoprotein biosynthetic process"/>
    <property type="evidence" value="ECO:0007669"/>
    <property type="project" value="UniProtKB-UniRule"/>
</dbReference>
<dbReference type="HAMAP" id="MF_01147">
    <property type="entry name" value="Lgt"/>
    <property type="match status" value="1"/>
</dbReference>
<dbReference type="InterPro" id="IPR001640">
    <property type="entry name" value="Lgt"/>
</dbReference>
<dbReference type="NCBIfam" id="TIGR00544">
    <property type="entry name" value="lgt"/>
    <property type="match status" value="1"/>
</dbReference>
<dbReference type="PANTHER" id="PTHR30589:SF0">
    <property type="entry name" value="PHOSPHATIDYLGLYCEROL--PROLIPOPROTEIN DIACYLGLYCERYL TRANSFERASE"/>
    <property type="match status" value="1"/>
</dbReference>
<dbReference type="PANTHER" id="PTHR30589">
    <property type="entry name" value="PROLIPOPROTEIN DIACYLGLYCERYL TRANSFERASE"/>
    <property type="match status" value="1"/>
</dbReference>
<dbReference type="Pfam" id="PF01790">
    <property type="entry name" value="LGT"/>
    <property type="match status" value="1"/>
</dbReference>
<comment type="function">
    <text evidence="1">Catalyzes the transfer of the diacylglyceryl group from phosphatidylglycerol to the sulfhydryl group of the N-terminal cysteine of a prolipoprotein, the first step in the formation of mature lipoproteins.</text>
</comment>
<comment type="catalytic activity">
    <reaction evidence="1">
        <text>L-cysteinyl-[prolipoprotein] + a 1,2-diacyl-sn-glycero-3-phospho-(1'-sn-glycerol) = an S-1,2-diacyl-sn-glyceryl-L-cysteinyl-[prolipoprotein] + sn-glycerol 1-phosphate + H(+)</text>
        <dbReference type="Rhea" id="RHEA:56712"/>
        <dbReference type="Rhea" id="RHEA-COMP:14679"/>
        <dbReference type="Rhea" id="RHEA-COMP:14680"/>
        <dbReference type="ChEBI" id="CHEBI:15378"/>
        <dbReference type="ChEBI" id="CHEBI:29950"/>
        <dbReference type="ChEBI" id="CHEBI:57685"/>
        <dbReference type="ChEBI" id="CHEBI:64716"/>
        <dbReference type="ChEBI" id="CHEBI:140658"/>
        <dbReference type="EC" id="2.5.1.145"/>
    </reaction>
</comment>
<comment type="pathway">
    <text evidence="1">Protein modification; lipoprotein biosynthesis (diacylglyceryl transfer).</text>
</comment>
<comment type="subcellular location">
    <subcellularLocation>
        <location evidence="1">Cell inner membrane</location>
        <topology evidence="1">Multi-pass membrane protein</topology>
    </subcellularLocation>
</comment>
<comment type="similarity">
    <text evidence="1">Belongs to the Lgt family.</text>
</comment>
<accession>Q5P9I4</accession>
<sequence>MSGMSICFAMREAVEWILHLDPVFMHVGPLEIRWYALSYVFGILFAHWHITKASQCLALDKKFLDSLMLWAVIGIILGGRTAYILLYNPSFYWEYPSEILQTWHGGMSMHGGYVGCIIAVSIVCKKHRVRVMPVLDLCACAAPLGLFLGRMANLVNGELYGRATTTCLGVVFPSSGDLVPRHPSQVYEAMLEGLLPLLFMSILARYTKVRLRFGVLSHMFGAWYGIVRCAVEFFREPDPQVGYIAFGWLTMGQVLSAPIAVVGIFMLVLTVLREKPREGVADISA</sequence>
<reference key="1">
    <citation type="journal article" date="2005" name="Proc. Natl. Acad. Sci. U.S.A.">
        <title>Complete genome sequencing of Anaplasma marginale reveals that the surface is skewed to two superfamilies of outer membrane proteins.</title>
        <authorList>
            <person name="Brayton K.A."/>
            <person name="Kappmeyer L.S."/>
            <person name="Herndon D.R."/>
            <person name="Dark M.J."/>
            <person name="Tibbals D.L."/>
            <person name="Palmer G.H."/>
            <person name="McGuire T.C."/>
            <person name="Knowles D.P. Jr."/>
        </authorList>
    </citation>
    <scope>NUCLEOTIDE SEQUENCE [LARGE SCALE GENOMIC DNA]</scope>
    <source>
        <strain>St. Maries</strain>
    </source>
</reference>
<organism>
    <name type="scientific">Anaplasma marginale (strain St. Maries)</name>
    <dbReference type="NCBI Taxonomy" id="234826"/>
    <lineage>
        <taxon>Bacteria</taxon>
        <taxon>Pseudomonadati</taxon>
        <taxon>Pseudomonadota</taxon>
        <taxon>Alphaproteobacteria</taxon>
        <taxon>Rickettsiales</taxon>
        <taxon>Anaplasmataceae</taxon>
        <taxon>Anaplasma</taxon>
    </lineage>
</organism>
<protein>
    <recommendedName>
        <fullName evidence="1">Phosphatidylglycerol--prolipoprotein diacylglyceryl transferase</fullName>
        <ecNumber evidence="1">2.5.1.145</ecNumber>
    </recommendedName>
</protein>
<feature type="chain" id="PRO_0000172540" description="Phosphatidylglycerol--prolipoprotein diacylglyceryl transferase">
    <location>
        <begin position="1"/>
        <end position="285"/>
    </location>
</feature>
<feature type="transmembrane region" description="Helical" evidence="1">
    <location>
        <begin position="30"/>
        <end position="50"/>
    </location>
</feature>
<feature type="transmembrane region" description="Helical" evidence="1">
    <location>
        <begin position="67"/>
        <end position="87"/>
    </location>
</feature>
<feature type="transmembrane region" description="Helical" evidence="1">
    <location>
        <begin position="103"/>
        <end position="123"/>
    </location>
</feature>
<feature type="transmembrane region" description="Helical" evidence="1">
    <location>
        <begin position="129"/>
        <end position="149"/>
    </location>
</feature>
<feature type="transmembrane region" description="Helical" evidence="1">
    <location>
        <begin position="184"/>
        <end position="204"/>
    </location>
</feature>
<feature type="transmembrane region" description="Helical" evidence="1">
    <location>
        <begin position="213"/>
        <end position="233"/>
    </location>
</feature>
<feature type="transmembrane region" description="Helical" evidence="1">
    <location>
        <begin position="252"/>
        <end position="272"/>
    </location>
</feature>
<feature type="binding site" evidence="1">
    <location>
        <position position="150"/>
    </location>
    <ligand>
        <name>a 1,2-diacyl-sn-glycero-3-phospho-(1'-sn-glycerol)</name>
        <dbReference type="ChEBI" id="CHEBI:64716"/>
    </ligand>
</feature>
<proteinExistence type="inferred from homology"/>
<gene>
    <name evidence="1" type="primary">lgt</name>
    <name type="ordered locus">AM1231</name>
</gene>
<name>LGT_ANAMM</name>